<sequence>MSNLKISDRFVKPFLDQSKLEKELERAEMARQTVLNGSGLGNEFLGWVNLPSQTKAEDLQNIRKAAELIQSHSQYLVVVGIGGSYLGARAVIEALTPEFSTPETQKKTVKILYAGHHLDADYHFRLLAFLENKEFSVNVISKSGTTTEPAIAFRLLLSLLERKYGKENIKHRVFATTDRSKGALKHLADEYKFPTFVIPDDVGGRYSVFTPVGLLPIAAAGFSINKLMDGAKQMESELKSTASKDGNLACFYAAIRNGLYSLGKTTEIFVSYNPSFGYVSEWWKQLFGESEGKNGKGIFPASVQFTTDLHSMGQYIQDGERKLMETVIKVEAPKQDVYLTEKTDDNDGLNYLAGKKLSEVNQSAMLGTLIAHKDGGVPCLEITLPSINEETLGELLYFYEFSCAVSGYMLGVNPFDQPGVEDYKNNMFALLGKKGYEKRKEEILSHLGFS</sequence>
<organism>
    <name type="scientific">Leptospira biflexa serovar Patoc (strain Patoc 1 / ATCC 23582 / Paris)</name>
    <dbReference type="NCBI Taxonomy" id="456481"/>
    <lineage>
        <taxon>Bacteria</taxon>
        <taxon>Pseudomonadati</taxon>
        <taxon>Spirochaetota</taxon>
        <taxon>Spirochaetia</taxon>
        <taxon>Leptospirales</taxon>
        <taxon>Leptospiraceae</taxon>
        <taxon>Leptospira</taxon>
    </lineage>
</organism>
<keyword id="KW-0963">Cytoplasm</keyword>
<keyword id="KW-0312">Gluconeogenesis</keyword>
<keyword id="KW-0324">Glycolysis</keyword>
<keyword id="KW-0413">Isomerase</keyword>
<keyword id="KW-1185">Reference proteome</keyword>
<protein>
    <recommendedName>
        <fullName evidence="1">Glucose-6-phosphate isomerase</fullName>
        <shortName evidence="1">GPI</shortName>
        <ecNumber evidence="1">5.3.1.9</ecNumber>
    </recommendedName>
    <alternativeName>
        <fullName evidence="1">Phosphoglucose isomerase</fullName>
        <shortName evidence="1">PGI</shortName>
    </alternativeName>
    <alternativeName>
        <fullName evidence="1">Phosphohexose isomerase</fullName>
        <shortName evidence="1">PHI</shortName>
    </alternativeName>
</protein>
<comment type="function">
    <text evidence="1">Catalyzes the reversible isomerization of glucose-6-phosphate to fructose-6-phosphate.</text>
</comment>
<comment type="catalytic activity">
    <reaction evidence="1">
        <text>alpha-D-glucose 6-phosphate = beta-D-fructose 6-phosphate</text>
        <dbReference type="Rhea" id="RHEA:11816"/>
        <dbReference type="ChEBI" id="CHEBI:57634"/>
        <dbReference type="ChEBI" id="CHEBI:58225"/>
        <dbReference type="EC" id="5.3.1.9"/>
    </reaction>
</comment>
<comment type="pathway">
    <text evidence="1">Carbohydrate biosynthesis; gluconeogenesis.</text>
</comment>
<comment type="pathway">
    <text evidence="1">Carbohydrate degradation; glycolysis; D-glyceraldehyde 3-phosphate and glycerone phosphate from D-glucose: step 2/4.</text>
</comment>
<comment type="subcellular location">
    <subcellularLocation>
        <location evidence="1">Cytoplasm</location>
    </subcellularLocation>
</comment>
<comment type="similarity">
    <text evidence="1">Belongs to the GPI family.</text>
</comment>
<dbReference type="EC" id="5.3.1.9" evidence="1"/>
<dbReference type="EMBL" id="CP000786">
    <property type="protein sequence ID" value="ABZ96221.1"/>
    <property type="molecule type" value="Genomic_DNA"/>
</dbReference>
<dbReference type="RefSeq" id="WP_012387111.1">
    <property type="nucleotide sequence ID" value="NC_010602.1"/>
</dbReference>
<dbReference type="SMR" id="B0SJQ8"/>
<dbReference type="STRING" id="456481.LEPBI_I0074"/>
<dbReference type="KEGG" id="lbi:LEPBI_I0074"/>
<dbReference type="HOGENOM" id="CLU_037303_0_1_12"/>
<dbReference type="OrthoDB" id="140919at2"/>
<dbReference type="BioCyc" id="LBIF456481:LEPBI_RS00375-MONOMER"/>
<dbReference type="UniPathway" id="UPA00109">
    <property type="reaction ID" value="UER00181"/>
</dbReference>
<dbReference type="UniPathway" id="UPA00138"/>
<dbReference type="Proteomes" id="UP000001847">
    <property type="component" value="Chromosome I"/>
</dbReference>
<dbReference type="GO" id="GO:0005829">
    <property type="term" value="C:cytosol"/>
    <property type="evidence" value="ECO:0007669"/>
    <property type="project" value="TreeGrafter"/>
</dbReference>
<dbReference type="GO" id="GO:0097367">
    <property type="term" value="F:carbohydrate derivative binding"/>
    <property type="evidence" value="ECO:0007669"/>
    <property type="project" value="InterPro"/>
</dbReference>
<dbReference type="GO" id="GO:0004347">
    <property type="term" value="F:glucose-6-phosphate isomerase activity"/>
    <property type="evidence" value="ECO:0007669"/>
    <property type="project" value="UniProtKB-UniRule"/>
</dbReference>
<dbReference type="GO" id="GO:0048029">
    <property type="term" value="F:monosaccharide binding"/>
    <property type="evidence" value="ECO:0007669"/>
    <property type="project" value="TreeGrafter"/>
</dbReference>
<dbReference type="GO" id="GO:0006094">
    <property type="term" value="P:gluconeogenesis"/>
    <property type="evidence" value="ECO:0007669"/>
    <property type="project" value="UniProtKB-UniRule"/>
</dbReference>
<dbReference type="GO" id="GO:0051156">
    <property type="term" value="P:glucose 6-phosphate metabolic process"/>
    <property type="evidence" value="ECO:0007669"/>
    <property type="project" value="TreeGrafter"/>
</dbReference>
<dbReference type="GO" id="GO:0006096">
    <property type="term" value="P:glycolytic process"/>
    <property type="evidence" value="ECO:0007669"/>
    <property type="project" value="UniProtKB-UniRule"/>
</dbReference>
<dbReference type="CDD" id="cd05015">
    <property type="entry name" value="SIS_PGI_1"/>
    <property type="match status" value="1"/>
</dbReference>
<dbReference type="CDD" id="cd05016">
    <property type="entry name" value="SIS_PGI_2"/>
    <property type="match status" value="1"/>
</dbReference>
<dbReference type="FunFam" id="3.40.50.10490:FF:000015">
    <property type="entry name" value="Glucose-6-phosphate isomerase"/>
    <property type="match status" value="1"/>
</dbReference>
<dbReference type="FunFam" id="3.40.50.10490:FF:000016">
    <property type="entry name" value="Glucose-6-phosphate isomerase"/>
    <property type="match status" value="1"/>
</dbReference>
<dbReference type="Gene3D" id="3.40.50.10490">
    <property type="entry name" value="Glucose-6-phosphate isomerase like protein, domain 1"/>
    <property type="match status" value="2"/>
</dbReference>
<dbReference type="HAMAP" id="MF_00473">
    <property type="entry name" value="G6P_isomerase"/>
    <property type="match status" value="1"/>
</dbReference>
<dbReference type="InterPro" id="IPR001672">
    <property type="entry name" value="G6P_Isomerase"/>
</dbReference>
<dbReference type="InterPro" id="IPR018189">
    <property type="entry name" value="Phosphoglucose_isomerase_CS"/>
</dbReference>
<dbReference type="InterPro" id="IPR046348">
    <property type="entry name" value="SIS_dom_sf"/>
</dbReference>
<dbReference type="InterPro" id="IPR035476">
    <property type="entry name" value="SIS_PGI_1"/>
</dbReference>
<dbReference type="InterPro" id="IPR035482">
    <property type="entry name" value="SIS_PGI_2"/>
</dbReference>
<dbReference type="NCBIfam" id="NF010697">
    <property type="entry name" value="PRK14097.1"/>
    <property type="match status" value="1"/>
</dbReference>
<dbReference type="PANTHER" id="PTHR11469">
    <property type="entry name" value="GLUCOSE-6-PHOSPHATE ISOMERASE"/>
    <property type="match status" value="1"/>
</dbReference>
<dbReference type="PANTHER" id="PTHR11469:SF1">
    <property type="entry name" value="GLUCOSE-6-PHOSPHATE ISOMERASE"/>
    <property type="match status" value="1"/>
</dbReference>
<dbReference type="Pfam" id="PF00342">
    <property type="entry name" value="PGI"/>
    <property type="match status" value="1"/>
</dbReference>
<dbReference type="PRINTS" id="PR00662">
    <property type="entry name" value="G6PISOMERASE"/>
</dbReference>
<dbReference type="SUPFAM" id="SSF53697">
    <property type="entry name" value="SIS domain"/>
    <property type="match status" value="1"/>
</dbReference>
<dbReference type="PROSITE" id="PS00765">
    <property type="entry name" value="P_GLUCOSE_ISOMERASE_1"/>
    <property type="match status" value="1"/>
</dbReference>
<dbReference type="PROSITE" id="PS00174">
    <property type="entry name" value="P_GLUCOSE_ISOMERASE_2"/>
    <property type="match status" value="1"/>
</dbReference>
<dbReference type="PROSITE" id="PS51463">
    <property type="entry name" value="P_GLUCOSE_ISOMERASE_3"/>
    <property type="match status" value="1"/>
</dbReference>
<evidence type="ECO:0000255" key="1">
    <source>
        <dbReference type="HAMAP-Rule" id="MF_00473"/>
    </source>
</evidence>
<name>G6PI_LEPBP</name>
<proteinExistence type="inferred from homology"/>
<feature type="chain" id="PRO_1000125737" description="Glucose-6-phosphate isomerase">
    <location>
        <begin position="1"/>
        <end position="450"/>
    </location>
</feature>
<feature type="active site" description="Proton donor" evidence="1">
    <location>
        <position position="289"/>
    </location>
</feature>
<feature type="active site" evidence="1">
    <location>
        <position position="310"/>
    </location>
</feature>
<feature type="active site" evidence="1">
    <location>
        <position position="424"/>
    </location>
</feature>
<reference key="1">
    <citation type="journal article" date="2008" name="PLoS ONE">
        <title>Genome sequence of the saprophyte Leptospira biflexa provides insights into the evolution of Leptospira and the pathogenesis of leptospirosis.</title>
        <authorList>
            <person name="Picardeau M."/>
            <person name="Bulach D.M."/>
            <person name="Bouchier C."/>
            <person name="Zuerner R.L."/>
            <person name="Zidane N."/>
            <person name="Wilson P.J."/>
            <person name="Creno S."/>
            <person name="Kuczek E.S."/>
            <person name="Bommezzadri S."/>
            <person name="Davis J.C."/>
            <person name="McGrath A."/>
            <person name="Johnson M.J."/>
            <person name="Boursaux-Eude C."/>
            <person name="Seemann T."/>
            <person name="Rouy Z."/>
            <person name="Coppel R.L."/>
            <person name="Rood J.I."/>
            <person name="Lajus A."/>
            <person name="Davies J.K."/>
            <person name="Medigue C."/>
            <person name="Adler B."/>
        </authorList>
    </citation>
    <scope>NUCLEOTIDE SEQUENCE [LARGE SCALE GENOMIC DNA]</scope>
    <source>
        <strain>Patoc 1 / ATCC 23582 / Paris</strain>
    </source>
</reference>
<accession>B0SJQ8</accession>
<gene>
    <name evidence="1" type="primary">pgi</name>
    <name type="ordered locus">LEPBI_I0074</name>
</gene>